<dbReference type="EC" id="1.1.1.17" evidence="1"/>
<dbReference type="EMBL" id="CP000950">
    <property type="protein sequence ID" value="ACA66341.1"/>
    <property type="molecule type" value="Genomic_DNA"/>
</dbReference>
<dbReference type="RefSeq" id="WP_012303323.1">
    <property type="nucleotide sequence ID" value="NZ_CP009792.1"/>
</dbReference>
<dbReference type="SMR" id="B1JH11"/>
<dbReference type="KEGG" id="ypy:YPK_0027"/>
<dbReference type="PATRIC" id="fig|502800.11.peg.628"/>
<dbReference type="GO" id="GO:0005829">
    <property type="term" value="C:cytosol"/>
    <property type="evidence" value="ECO:0007669"/>
    <property type="project" value="TreeGrafter"/>
</dbReference>
<dbReference type="GO" id="GO:0008926">
    <property type="term" value="F:mannitol-1-phosphate 5-dehydrogenase activity"/>
    <property type="evidence" value="ECO:0007669"/>
    <property type="project" value="UniProtKB-UniRule"/>
</dbReference>
<dbReference type="GO" id="GO:0019592">
    <property type="term" value="P:mannitol catabolic process"/>
    <property type="evidence" value="ECO:0007669"/>
    <property type="project" value="TreeGrafter"/>
</dbReference>
<dbReference type="FunFam" id="1.10.1040.10:FF:000009">
    <property type="entry name" value="Mannitol-1-phosphate 5-dehydrogenase"/>
    <property type="match status" value="1"/>
</dbReference>
<dbReference type="FunFam" id="3.40.50.720:FF:000075">
    <property type="entry name" value="Mannitol-1-phosphate 5-dehydrogenase"/>
    <property type="match status" value="1"/>
</dbReference>
<dbReference type="Gene3D" id="1.10.1040.10">
    <property type="entry name" value="N-(1-d-carboxylethyl)-l-norvaline Dehydrogenase, domain 2"/>
    <property type="match status" value="1"/>
</dbReference>
<dbReference type="Gene3D" id="3.40.50.720">
    <property type="entry name" value="NAD(P)-binding Rossmann-like Domain"/>
    <property type="match status" value="1"/>
</dbReference>
<dbReference type="HAMAP" id="MF_00196">
    <property type="entry name" value="Mannitol_dehydrog"/>
    <property type="match status" value="1"/>
</dbReference>
<dbReference type="InterPro" id="IPR008927">
    <property type="entry name" value="6-PGluconate_DH-like_C_sf"/>
</dbReference>
<dbReference type="InterPro" id="IPR013328">
    <property type="entry name" value="6PGD_dom2"/>
</dbReference>
<dbReference type="InterPro" id="IPR023028">
    <property type="entry name" value="Mannitol_1_phos_5_DH"/>
</dbReference>
<dbReference type="InterPro" id="IPR000669">
    <property type="entry name" value="Mannitol_DH"/>
</dbReference>
<dbReference type="InterPro" id="IPR013118">
    <property type="entry name" value="Mannitol_DH_C"/>
</dbReference>
<dbReference type="InterPro" id="IPR023027">
    <property type="entry name" value="Mannitol_DH_CS"/>
</dbReference>
<dbReference type="InterPro" id="IPR013131">
    <property type="entry name" value="Mannitol_DH_N"/>
</dbReference>
<dbReference type="InterPro" id="IPR036291">
    <property type="entry name" value="NAD(P)-bd_dom_sf"/>
</dbReference>
<dbReference type="NCBIfam" id="NF002646">
    <property type="entry name" value="PRK02318.1-2"/>
    <property type="match status" value="1"/>
</dbReference>
<dbReference type="NCBIfam" id="NF002647">
    <property type="entry name" value="PRK02318.1-3"/>
    <property type="match status" value="1"/>
</dbReference>
<dbReference type="NCBIfam" id="NF002650">
    <property type="entry name" value="PRK02318.2-2"/>
    <property type="match status" value="1"/>
</dbReference>
<dbReference type="NCBIfam" id="NF002652">
    <property type="entry name" value="PRK02318.2-5"/>
    <property type="match status" value="1"/>
</dbReference>
<dbReference type="PANTHER" id="PTHR30524:SF0">
    <property type="entry name" value="ALTRONATE OXIDOREDUCTASE-RELATED"/>
    <property type="match status" value="1"/>
</dbReference>
<dbReference type="PANTHER" id="PTHR30524">
    <property type="entry name" value="MANNITOL-1-PHOSPHATE 5-DEHYDROGENASE"/>
    <property type="match status" value="1"/>
</dbReference>
<dbReference type="Pfam" id="PF01232">
    <property type="entry name" value="Mannitol_dh"/>
    <property type="match status" value="1"/>
</dbReference>
<dbReference type="Pfam" id="PF08125">
    <property type="entry name" value="Mannitol_dh_C"/>
    <property type="match status" value="1"/>
</dbReference>
<dbReference type="PRINTS" id="PR00084">
    <property type="entry name" value="MTLDHDRGNASE"/>
</dbReference>
<dbReference type="SUPFAM" id="SSF48179">
    <property type="entry name" value="6-phosphogluconate dehydrogenase C-terminal domain-like"/>
    <property type="match status" value="1"/>
</dbReference>
<dbReference type="SUPFAM" id="SSF51735">
    <property type="entry name" value="NAD(P)-binding Rossmann-fold domains"/>
    <property type="match status" value="1"/>
</dbReference>
<dbReference type="PROSITE" id="PS00974">
    <property type="entry name" value="MANNITOL_DHGENASE"/>
    <property type="match status" value="1"/>
</dbReference>
<comment type="catalytic activity">
    <reaction evidence="1">
        <text>D-mannitol 1-phosphate + NAD(+) = beta-D-fructose 6-phosphate + NADH + H(+)</text>
        <dbReference type="Rhea" id="RHEA:19661"/>
        <dbReference type="ChEBI" id="CHEBI:15378"/>
        <dbReference type="ChEBI" id="CHEBI:57540"/>
        <dbReference type="ChEBI" id="CHEBI:57634"/>
        <dbReference type="ChEBI" id="CHEBI:57945"/>
        <dbReference type="ChEBI" id="CHEBI:61381"/>
        <dbReference type="EC" id="1.1.1.17"/>
    </reaction>
</comment>
<comment type="similarity">
    <text evidence="1">Belongs to the mannitol dehydrogenase family.</text>
</comment>
<reference key="1">
    <citation type="submission" date="2008-02" db="EMBL/GenBank/DDBJ databases">
        <title>Complete sequence of Yersinia pseudotuberculosis YPIII.</title>
        <authorList>
            <consortium name="US DOE Joint Genome Institute"/>
            <person name="Copeland A."/>
            <person name="Lucas S."/>
            <person name="Lapidus A."/>
            <person name="Glavina del Rio T."/>
            <person name="Dalin E."/>
            <person name="Tice H."/>
            <person name="Bruce D."/>
            <person name="Goodwin L."/>
            <person name="Pitluck S."/>
            <person name="Munk A.C."/>
            <person name="Brettin T."/>
            <person name="Detter J.C."/>
            <person name="Han C."/>
            <person name="Tapia R."/>
            <person name="Schmutz J."/>
            <person name="Larimer F."/>
            <person name="Land M."/>
            <person name="Hauser L."/>
            <person name="Challacombe J.F."/>
            <person name="Green L."/>
            <person name="Lindler L.E."/>
            <person name="Nikolich M.P."/>
            <person name="Richardson P."/>
        </authorList>
    </citation>
    <scope>NUCLEOTIDE SEQUENCE [LARGE SCALE GENOMIC DNA]</scope>
    <source>
        <strain>YPIII</strain>
    </source>
</reference>
<feature type="chain" id="PRO_1000099211" description="Mannitol-1-phosphate 5-dehydrogenase">
    <location>
        <begin position="1"/>
        <end position="387"/>
    </location>
</feature>
<feature type="binding site" evidence="1">
    <location>
        <begin position="3"/>
        <end position="14"/>
    </location>
    <ligand>
        <name>NAD(+)</name>
        <dbReference type="ChEBI" id="CHEBI:57540"/>
    </ligand>
</feature>
<protein>
    <recommendedName>
        <fullName evidence="1">Mannitol-1-phosphate 5-dehydrogenase</fullName>
        <ecNumber evidence="1">1.1.1.17</ecNumber>
    </recommendedName>
</protein>
<sequence length="387" mass="41960">MKALHFGAGNIGRGFIGKLLADAGAQLTFADVNQPLLDALNKRKRYQVNVVGEQARVEEVKNVSAVNSGSPEVVALIAEADIVTTAVGPQILARIAATVAQGLITRHQQGNTRPLNIIACENMVRGTSQLKQHVFAALSEDEQIWVEQHVGFVDSAVDRIVPPSEAGSTDILAVTVETFSEWIVDGTQFKGQPPEIVGMELTDNLMAFVERKLFTLNTGHAITAYLGQLAGHQTIRDAILDPAVRQTVKGAMEESGAVLIKRYAFDPQKHAAYINKILSRFENPYLHDDVERVGRQPLRKLSAGDRLIKPLLGTLEYQLPHDSLVTGIAAAMSYRSEQDPQAQELVTLLAQLGPKAALAQISGLPADSEVVEQAVSVYNAMQQKLAH</sequence>
<organism>
    <name type="scientific">Yersinia pseudotuberculosis serotype O:3 (strain YPIII)</name>
    <dbReference type="NCBI Taxonomy" id="502800"/>
    <lineage>
        <taxon>Bacteria</taxon>
        <taxon>Pseudomonadati</taxon>
        <taxon>Pseudomonadota</taxon>
        <taxon>Gammaproteobacteria</taxon>
        <taxon>Enterobacterales</taxon>
        <taxon>Yersiniaceae</taxon>
        <taxon>Yersinia</taxon>
    </lineage>
</organism>
<accession>B1JH11</accession>
<keyword id="KW-0520">NAD</keyword>
<keyword id="KW-0560">Oxidoreductase</keyword>
<proteinExistence type="inferred from homology"/>
<name>MTLD_YERPY</name>
<evidence type="ECO:0000255" key="1">
    <source>
        <dbReference type="HAMAP-Rule" id="MF_00196"/>
    </source>
</evidence>
<gene>
    <name evidence="1" type="primary">mtlD</name>
    <name type="ordered locus">YPK_0027</name>
</gene>